<feature type="chain" id="PRO_1000194956" description="Ribosome-recycling factor">
    <location>
        <begin position="1"/>
        <end position="185"/>
    </location>
</feature>
<accession>C1CDU1</accession>
<name>RRF_STRZJ</name>
<proteinExistence type="inferred from homology"/>
<gene>
    <name evidence="1" type="primary">frr</name>
    <name type="ordered locus">SPJ_0884</name>
</gene>
<reference key="1">
    <citation type="journal article" date="2010" name="Genome Biol.">
        <title>Structure and dynamics of the pan-genome of Streptococcus pneumoniae and closely related species.</title>
        <authorList>
            <person name="Donati C."/>
            <person name="Hiller N.L."/>
            <person name="Tettelin H."/>
            <person name="Muzzi A."/>
            <person name="Croucher N.J."/>
            <person name="Angiuoli S.V."/>
            <person name="Oggioni M."/>
            <person name="Dunning Hotopp J.C."/>
            <person name="Hu F.Z."/>
            <person name="Riley D.R."/>
            <person name="Covacci A."/>
            <person name="Mitchell T.J."/>
            <person name="Bentley S.D."/>
            <person name="Kilian M."/>
            <person name="Ehrlich G.D."/>
            <person name="Rappuoli R."/>
            <person name="Moxon E.R."/>
            <person name="Masignani V."/>
        </authorList>
    </citation>
    <scope>NUCLEOTIDE SEQUENCE [LARGE SCALE GENOMIC DNA]</scope>
    <source>
        <strain>JJA</strain>
    </source>
</reference>
<evidence type="ECO:0000255" key="1">
    <source>
        <dbReference type="HAMAP-Rule" id="MF_00040"/>
    </source>
</evidence>
<dbReference type="EMBL" id="CP000919">
    <property type="protein sequence ID" value="ACO19475.1"/>
    <property type="molecule type" value="Genomic_DNA"/>
</dbReference>
<dbReference type="RefSeq" id="WP_000024409.1">
    <property type="nucleotide sequence ID" value="NC_012466.1"/>
</dbReference>
<dbReference type="SMR" id="C1CDU1"/>
<dbReference type="KEGG" id="sjj:SPJ_0884"/>
<dbReference type="HOGENOM" id="CLU_073981_2_0_9"/>
<dbReference type="Proteomes" id="UP000002206">
    <property type="component" value="Chromosome"/>
</dbReference>
<dbReference type="GO" id="GO:0005737">
    <property type="term" value="C:cytoplasm"/>
    <property type="evidence" value="ECO:0007669"/>
    <property type="project" value="UniProtKB-SubCell"/>
</dbReference>
<dbReference type="GO" id="GO:0043023">
    <property type="term" value="F:ribosomal large subunit binding"/>
    <property type="evidence" value="ECO:0007669"/>
    <property type="project" value="TreeGrafter"/>
</dbReference>
<dbReference type="GO" id="GO:0006415">
    <property type="term" value="P:translational termination"/>
    <property type="evidence" value="ECO:0007669"/>
    <property type="project" value="UniProtKB-UniRule"/>
</dbReference>
<dbReference type="CDD" id="cd00520">
    <property type="entry name" value="RRF"/>
    <property type="match status" value="1"/>
</dbReference>
<dbReference type="FunFam" id="1.10.132.20:FF:000001">
    <property type="entry name" value="Ribosome-recycling factor"/>
    <property type="match status" value="1"/>
</dbReference>
<dbReference type="FunFam" id="3.30.1360.40:FF:000001">
    <property type="entry name" value="Ribosome-recycling factor"/>
    <property type="match status" value="1"/>
</dbReference>
<dbReference type="Gene3D" id="3.30.1360.40">
    <property type="match status" value="1"/>
</dbReference>
<dbReference type="Gene3D" id="1.10.132.20">
    <property type="entry name" value="Ribosome-recycling factor"/>
    <property type="match status" value="1"/>
</dbReference>
<dbReference type="HAMAP" id="MF_00040">
    <property type="entry name" value="RRF"/>
    <property type="match status" value="1"/>
</dbReference>
<dbReference type="InterPro" id="IPR002661">
    <property type="entry name" value="Ribosome_recyc_fac"/>
</dbReference>
<dbReference type="InterPro" id="IPR023584">
    <property type="entry name" value="Ribosome_recyc_fac_dom"/>
</dbReference>
<dbReference type="InterPro" id="IPR036191">
    <property type="entry name" value="RRF_sf"/>
</dbReference>
<dbReference type="NCBIfam" id="TIGR00496">
    <property type="entry name" value="frr"/>
    <property type="match status" value="1"/>
</dbReference>
<dbReference type="PANTHER" id="PTHR20982:SF3">
    <property type="entry name" value="MITOCHONDRIAL RIBOSOME RECYCLING FACTOR PSEUDO 1"/>
    <property type="match status" value="1"/>
</dbReference>
<dbReference type="PANTHER" id="PTHR20982">
    <property type="entry name" value="RIBOSOME RECYCLING FACTOR"/>
    <property type="match status" value="1"/>
</dbReference>
<dbReference type="Pfam" id="PF01765">
    <property type="entry name" value="RRF"/>
    <property type="match status" value="1"/>
</dbReference>
<dbReference type="SUPFAM" id="SSF55194">
    <property type="entry name" value="Ribosome recycling factor, RRF"/>
    <property type="match status" value="1"/>
</dbReference>
<keyword id="KW-0963">Cytoplasm</keyword>
<keyword id="KW-0648">Protein biosynthesis</keyword>
<organism>
    <name type="scientific">Streptococcus pneumoniae (strain JJA)</name>
    <dbReference type="NCBI Taxonomy" id="488222"/>
    <lineage>
        <taxon>Bacteria</taxon>
        <taxon>Bacillati</taxon>
        <taxon>Bacillota</taxon>
        <taxon>Bacilli</taxon>
        <taxon>Lactobacillales</taxon>
        <taxon>Streptococcaceae</taxon>
        <taxon>Streptococcus</taxon>
    </lineage>
</organism>
<sequence>MANVIIEKAKERMTQSHQSLAREFGGIRAGRANASLLDRVHVEYYGVETPLNQIASITIPEARVLLVTPFDKSSLKDIERALNASDLGITPANDGSVIRLVIPALTEETRRDLAKEVKKVGENAKVAVRNIRRDAMDEAKKQEKAKEITEDELKTLEKDIQKVTDDAVKHIDDMTANKEKELLEV</sequence>
<comment type="function">
    <text evidence="1">Responsible for the release of ribosomes from messenger RNA at the termination of protein biosynthesis. May increase the efficiency of translation by recycling ribosomes from one round of translation to another.</text>
</comment>
<comment type="subcellular location">
    <subcellularLocation>
        <location evidence="1">Cytoplasm</location>
    </subcellularLocation>
</comment>
<comment type="similarity">
    <text evidence="1">Belongs to the RRF family.</text>
</comment>
<protein>
    <recommendedName>
        <fullName evidence="1">Ribosome-recycling factor</fullName>
        <shortName evidence="1">RRF</shortName>
    </recommendedName>
    <alternativeName>
        <fullName evidence="1">Ribosome-releasing factor</fullName>
    </alternativeName>
</protein>